<reference key="1">
    <citation type="journal article" date="2011" name="MBio">
        <title>Novel metabolic attributes of the genus Cyanothece, comprising a group of unicellular nitrogen-fixing Cyanobacteria.</title>
        <authorList>
            <person name="Bandyopadhyay A."/>
            <person name="Elvitigala T."/>
            <person name="Welsh E."/>
            <person name="Stockel J."/>
            <person name="Liberton M."/>
            <person name="Min H."/>
            <person name="Sherman L.A."/>
            <person name="Pakrasi H.B."/>
        </authorList>
    </citation>
    <scope>NUCLEOTIDE SEQUENCE [LARGE SCALE GENOMIC DNA]</scope>
    <source>
        <strain>PCC 7425 / ATCC 29141</strain>
    </source>
</reference>
<keyword id="KW-0004">4Fe-4S</keyword>
<keyword id="KW-0148">Chlorophyll</keyword>
<keyword id="KW-0157">Chromophore</keyword>
<keyword id="KW-0249">Electron transport</keyword>
<keyword id="KW-0408">Iron</keyword>
<keyword id="KW-0411">Iron-sulfur</keyword>
<keyword id="KW-0460">Magnesium</keyword>
<keyword id="KW-0472">Membrane</keyword>
<keyword id="KW-0479">Metal-binding</keyword>
<keyword id="KW-0560">Oxidoreductase</keyword>
<keyword id="KW-0602">Photosynthesis</keyword>
<keyword id="KW-0603">Photosystem I</keyword>
<keyword id="KW-0793">Thylakoid</keyword>
<keyword id="KW-0812">Transmembrane</keyword>
<keyword id="KW-1133">Transmembrane helix</keyword>
<keyword id="KW-0813">Transport</keyword>
<organism>
    <name type="scientific">Cyanothece sp. (strain PCC 7425 / ATCC 29141)</name>
    <dbReference type="NCBI Taxonomy" id="395961"/>
    <lineage>
        <taxon>Bacteria</taxon>
        <taxon>Bacillati</taxon>
        <taxon>Cyanobacteriota</taxon>
        <taxon>Cyanophyceae</taxon>
        <taxon>Gomontiellales</taxon>
        <taxon>Cyanothecaceae</taxon>
        <taxon>Cyanothece</taxon>
    </lineage>
</organism>
<name>PSAA_CYAP4</name>
<feature type="chain" id="PRO_1000201160" description="Photosystem I P700 chlorophyll a apoprotein A1">
    <location>
        <begin position="1"/>
        <end position="756"/>
    </location>
</feature>
<feature type="transmembrane region" description="Helical; Name=I" evidence="1">
    <location>
        <begin position="73"/>
        <end position="96"/>
    </location>
</feature>
<feature type="transmembrane region" description="Helical; Name=II" evidence="1">
    <location>
        <begin position="159"/>
        <end position="182"/>
    </location>
</feature>
<feature type="transmembrane region" description="Helical; Name=III" evidence="1">
    <location>
        <begin position="198"/>
        <end position="222"/>
    </location>
</feature>
<feature type="transmembrane region" description="Helical; Name=IV" evidence="1">
    <location>
        <begin position="298"/>
        <end position="316"/>
    </location>
</feature>
<feature type="transmembrane region" description="Helical; Name=V" evidence="1">
    <location>
        <begin position="353"/>
        <end position="376"/>
    </location>
</feature>
<feature type="transmembrane region" description="Helical; Name=VI" evidence="1">
    <location>
        <begin position="392"/>
        <end position="418"/>
    </location>
</feature>
<feature type="transmembrane region" description="Helical; Name=VII" evidence="1">
    <location>
        <begin position="440"/>
        <end position="462"/>
    </location>
</feature>
<feature type="transmembrane region" description="Helical; Name=VIII" evidence="1">
    <location>
        <begin position="537"/>
        <end position="555"/>
    </location>
</feature>
<feature type="transmembrane region" description="Helical; Name=IX" evidence="1">
    <location>
        <begin position="595"/>
        <end position="616"/>
    </location>
</feature>
<feature type="transmembrane region" description="Helical; Name=X" evidence="1">
    <location>
        <begin position="670"/>
        <end position="692"/>
    </location>
</feature>
<feature type="transmembrane region" description="Helical; Name=XI" evidence="1">
    <location>
        <begin position="730"/>
        <end position="750"/>
    </location>
</feature>
<feature type="binding site" evidence="1">
    <location>
        <position position="579"/>
    </location>
    <ligand>
        <name>[4Fe-4S] cluster</name>
        <dbReference type="ChEBI" id="CHEBI:49883"/>
        <note>ligand shared between dimeric partners</note>
    </ligand>
</feature>
<feature type="binding site" evidence="1">
    <location>
        <position position="588"/>
    </location>
    <ligand>
        <name>[4Fe-4S] cluster</name>
        <dbReference type="ChEBI" id="CHEBI:49883"/>
        <note>ligand shared between dimeric partners</note>
    </ligand>
</feature>
<feature type="binding site" description="axial binding residue" evidence="1">
    <location>
        <position position="681"/>
    </location>
    <ligand>
        <name>chlorophyll a'</name>
        <dbReference type="ChEBI" id="CHEBI:189419"/>
        <label>A1</label>
    </ligand>
    <ligandPart>
        <name>Mg</name>
        <dbReference type="ChEBI" id="CHEBI:25107"/>
    </ligandPart>
</feature>
<feature type="binding site" description="axial binding residue" evidence="1">
    <location>
        <position position="689"/>
    </location>
    <ligand>
        <name>chlorophyll a</name>
        <dbReference type="ChEBI" id="CHEBI:58416"/>
        <label>A3</label>
    </ligand>
    <ligandPart>
        <name>Mg</name>
        <dbReference type="ChEBI" id="CHEBI:25107"/>
    </ligandPart>
</feature>
<feature type="binding site" evidence="1">
    <location>
        <position position="697"/>
    </location>
    <ligand>
        <name>chlorophyll a</name>
        <dbReference type="ChEBI" id="CHEBI:58416"/>
        <label>A3</label>
    </ligand>
</feature>
<feature type="binding site" evidence="1">
    <location>
        <position position="698"/>
    </location>
    <ligand>
        <name>phylloquinone</name>
        <dbReference type="ChEBI" id="CHEBI:18067"/>
        <label>A</label>
    </ligand>
</feature>
<evidence type="ECO:0000255" key="1">
    <source>
        <dbReference type="HAMAP-Rule" id="MF_00458"/>
    </source>
</evidence>
<sequence>MTISPPEREKKVRVVVDNDPVPTSFERWAKPGHFDRTLARGPQTTTWIWNLHALAHDFDTHTDSSLEDVSRKIFSAHFGHLAVIFVWLSGMYFHGAKFSNYSAWLADPTRVKPSAQVVWPIVGQGILNGDVGGGFHGIQITSGLFQLWRASGITNEFQLYVTAIGGLVMAGLMLFAGWFHYHKRAPKLEWFQNVESMMNHHLAGLLGLGSLGWAGHQIHVSLPINKLLDAGVAAKDIPLPHEFILNPTLMSELYPKVEWGVMKGVIPFFTLNWGAYSDFLTFKGGLNPVTGGLWLSDTAHHHLAIAVLFIIAGHMYRTNWGIGHSMKEILEAHKGPFTGEGHKGLYETLTTSWHAQLAINLAMMGSLSIIVAHHMYSMPPYPYLATDYPTQLSLFTHHMWIGGFLIVGGAAHGAIYMVRDYDPVVNQNNLLDRVIRHRDAIISHLNWVCIFLGFHSFGLYIHNDTMRAFGRPQDMFSDTAIQLQPVFAQWVQNLHTLAPGGTAPNALEPVSYAFGGGVVAVGGKVAMMPIALGTADFLVHHIHAFTIHVTVLILLKGVLFARSSRLIPDKANLGFRFPCDGPGRGGTCQVSGWDHVFLGLFWMYNSLSIVIFHFSWKMQSDVWGTVAPDGTVTHITGGNFAQSALTINGWLRDFLWAQAAQVIGSYGSALSAYGLLFLGAHFVWAFSLMFLFSGRGYWQELIESIVWAHNKLKVAPSIQPRALSIIQGRAVGVAHYLLGGIATTWAFFLARIIAVG</sequence>
<comment type="function">
    <text evidence="1">PsaA and PsaB bind P700, the primary electron donor of photosystem I (PSI), as well as the electron acceptors A0, A1 and FX. PSI is a plastocyanin/cytochrome c6-ferredoxin oxidoreductase, converting photonic excitation into a charge separation, which transfers an electron from the donor P700 chlorophyll pair to the spectroscopically characterized acceptors A0, A1, FX, FA and FB in turn. Oxidized P700 is reduced on the lumenal side of the thylakoid membrane by plastocyanin or cytochrome c6.</text>
</comment>
<comment type="catalytic activity">
    <reaction evidence="1">
        <text>reduced [plastocyanin] + hnu + oxidized [2Fe-2S]-[ferredoxin] = oxidized [plastocyanin] + reduced [2Fe-2S]-[ferredoxin]</text>
        <dbReference type="Rhea" id="RHEA:30407"/>
        <dbReference type="Rhea" id="RHEA-COMP:10000"/>
        <dbReference type="Rhea" id="RHEA-COMP:10001"/>
        <dbReference type="Rhea" id="RHEA-COMP:10039"/>
        <dbReference type="Rhea" id="RHEA-COMP:10040"/>
        <dbReference type="ChEBI" id="CHEBI:29036"/>
        <dbReference type="ChEBI" id="CHEBI:30212"/>
        <dbReference type="ChEBI" id="CHEBI:33737"/>
        <dbReference type="ChEBI" id="CHEBI:33738"/>
        <dbReference type="ChEBI" id="CHEBI:49552"/>
        <dbReference type="EC" id="1.97.1.12"/>
    </reaction>
</comment>
<comment type="cofactor">
    <text evidence="1">PSI electron transfer chain: 5 chlorophyll a, 1 chlorophyll a', 2 phylloquinones and 3 4Fe-4S clusters. PSI core antenna: 90 chlorophyll a, 22 carotenoids, 3 phospholipids and 1 galactolipid. P700 is a chlorophyll a/chlorophyll a' dimer, A0 is one or more chlorophyll a, A1 is one or both phylloquinones and FX is a shared 4Fe-4S iron-sulfur center.</text>
</comment>
<comment type="subunit">
    <text evidence="1">The PsaA/B heterodimer binds the P700 chlorophyll special pair and subsequent electron acceptors. PSI consists of a core antenna complex that captures photons, and an electron transfer chain that converts photonic excitation into a charge separation. The cyanobacterial PSI reaction center is composed of one copy each of PsaA,B,C,D,E,F,I,J,K,L,M and X, and forms trimeric complexes.</text>
</comment>
<comment type="subcellular location">
    <subcellularLocation>
        <location evidence="1">Cellular thylakoid membrane</location>
        <topology evidence="1">Multi-pass membrane protein</topology>
    </subcellularLocation>
</comment>
<comment type="similarity">
    <text evidence="1">Belongs to the PsaA/PsaB family.</text>
</comment>
<proteinExistence type="inferred from homology"/>
<accession>B8HLB2</accession>
<protein>
    <recommendedName>
        <fullName evidence="1">Photosystem I P700 chlorophyll a apoprotein A1</fullName>
        <ecNumber evidence="1">1.97.1.12</ecNumber>
    </recommendedName>
    <alternativeName>
        <fullName evidence="1">PsaA</fullName>
    </alternativeName>
</protein>
<gene>
    <name evidence="1" type="primary">psaA</name>
    <name type="ordered locus">Cyan7425_4671</name>
</gene>
<dbReference type="EC" id="1.97.1.12" evidence="1"/>
<dbReference type="EMBL" id="CP001344">
    <property type="protein sequence ID" value="ACL46977.1"/>
    <property type="molecule type" value="Genomic_DNA"/>
</dbReference>
<dbReference type="SMR" id="B8HLB2"/>
<dbReference type="STRING" id="395961.Cyan7425_4671"/>
<dbReference type="KEGG" id="cyn:Cyan7425_4671"/>
<dbReference type="eggNOG" id="COG2885">
    <property type="taxonomic scope" value="Bacteria"/>
</dbReference>
<dbReference type="HOGENOM" id="CLU_016126_1_0_3"/>
<dbReference type="GO" id="GO:0009522">
    <property type="term" value="C:photosystem I"/>
    <property type="evidence" value="ECO:0007669"/>
    <property type="project" value="UniProtKB-KW"/>
</dbReference>
<dbReference type="GO" id="GO:0031676">
    <property type="term" value="C:plasma membrane-derived thylakoid membrane"/>
    <property type="evidence" value="ECO:0007669"/>
    <property type="project" value="UniProtKB-SubCell"/>
</dbReference>
<dbReference type="GO" id="GO:0051539">
    <property type="term" value="F:4 iron, 4 sulfur cluster binding"/>
    <property type="evidence" value="ECO:0007669"/>
    <property type="project" value="UniProtKB-KW"/>
</dbReference>
<dbReference type="GO" id="GO:0016168">
    <property type="term" value="F:chlorophyll binding"/>
    <property type="evidence" value="ECO:0007669"/>
    <property type="project" value="UniProtKB-KW"/>
</dbReference>
<dbReference type="GO" id="GO:0009055">
    <property type="term" value="F:electron transfer activity"/>
    <property type="evidence" value="ECO:0007669"/>
    <property type="project" value="UniProtKB-UniRule"/>
</dbReference>
<dbReference type="GO" id="GO:0000287">
    <property type="term" value="F:magnesium ion binding"/>
    <property type="evidence" value="ECO:0007669"/>
    <property type="project" value="UniProtKB-UniRule"/>
</dbReference>
<dbReference type="GO" id="GO:0016491">
    <property type="term" value="F:oxidoreductase activity"/>
    <property type="evidence" value="ECO:0007669"/>
    <property type="project" value="UniProtKB-KW"/>
</dbReference>
<dbReference type="GO" id="GO:0015979">
    <property type="term" value="P:photosynthesis"/>
    <property type="evidence" value="ECO:0007669"/>
    <property type="project" value="UniProtKB-UniRule"/>
</dbReference>
<dbReference type="FunFam" id="1.20.1130.10:FF:000001">
    <property type="entry name" value="Photosystem I P700 chlorophyll a apoprotein A2"/>
    <property type="match status" value="1"/>
</dbReference>
<dbReference type="Gene3D" id="1.20.1130.10">
    <property type="entry name" value="Photosystem I PsaA/PsaB"/>
    <property type="match status" value="1"/>
</dbReference>
<dbReference type="HAMAP" id="MF_00458">
    <property type="entry name" value="PSI_PsaA"/>
    <property type="match status" value="1"/>
</dbReference>
<dbReference type="InterPro" id="IPR006243">
    <property type="entry name" value="PSI_PsaA"/>
</dbReference>
<dbReference type="InterPro" id="IPR001280">
    <property type="entry name" value="PSI_PsaA/B"/>
</dbReference>
<dbReference type="InterPro" id="IPR020586">
    <property type="entry name" value="PSI_PsaA/B_CS"/>
</dbReference>
<dbReference type="InterPro" id="IPR036408">
    <property type="entry name" value="PSI_PsaA/B_sf"/>
</dbReference>
<dbReference type="NCBIfam" id="TIGR01335">
    <property type="entry name" value="psaA"/>
    <property type="match status" value="1"/>
</dbReference>
<dbReference type="PANTHER" id="PTHR30128">
    <property type="entry name" value="OUTER MEMBRANE PROTEIN, OMPA-RELATED"/>
    <property type="match status" value="1"/>
</dbReference>
<dbReference type="PANTHER" id="PTHR30128:SF19">
    <property type="entry name" value="PHOTOSYSTEM I P700 CHLOROPHYLL A APOPROTEIN A1-RELATED"/>
    <property type="match status" value="1"/>
</dbReference>
<dbReference type="Pfam" id="PF00223">
    <property type="entry name" value="PsaA_PsaB"/>
    <property type="match status" value="1"/>
</dbReference>
<dbReference type="PIRSF" id="PIRSF002905">
    <property type="entry name" value="PSI_A"/>
    <property type="match status" value="1"/>
</dbReference>
<dbReference type="PRINTS" id="PR00257">
    <property type="entry name" value="PHOTSYSPSAAB"/>
</dbReference>
<dbReference type="SUPFAM" id="SSF81558">
    <property type="entry name" value="Photosystem I subunits PsaA/PsaB"/>
    <property type="match status" value="1"/>
</dbReference>
<dbReference type="PROSITE" id="PS00419">
    <property type="entry name" value="PHOTOSYSTEM_I_PSAAB"/>
    <property type="match status" value="1"/>
</dbReference>